<feature type="chain" id="PRO_0000370442" description="Ribosome biogenesis protein ERB1">
    <location>
        <begin position="1"/>
        <end position="932"/>
    </location>
</feature>
<feature type="repeat" description="WD 1">
    <location>
        <begin position="555"/>
        <end position="594"/>
    </location>
</feature>
<feature type="repeat" description="WD 2">
    <location>
        <begin position="604"/>
        <end position="644"/>
    </location>
</feature>
<feature type="repeat" description="WD 3">
    <location>
        <begin position="762"/>
        <end position="800"/>
    </location>
</feature>
<feature type="repeat" description="WD 4">
    <location>
        <begin position="803"/>
        <end position="842"/>
    </location>
</feature>
<feature type="repeat" description="WD 5">
    <location>
        <begin position="846"/>
        <end position="885"/>
    </location>
</feature>
<feature type="repeat" description="WD 6">
    <location>
        <begin position="901"/>
        <end position="932"/>
    </location>
</feature>
<feature type="region of interest" description="Disordered" evidence="2">
    <location>
        <begin position="1"/>
        <end position="229"/>
    </location>
</feature>
<feature type="region of interest" description="Disordered" evidence="2">
    <location>
        <begin position="679"/>
        <end position="698"/>
    </location>
</feature>
<feature type="compositionally biased region" description="Low complexity" evidence="2">
    <location>
        <begin position="1"/>
        <end position="18"/>
    </location>
</feature>
<feature type="compositionally biased region" description="Polar residues" evidence="2">
    <location>
        <begin position="27"/>
        <end position="36"/>
    </location>
</feature>
<feature type="compositionally biased region" description="Acidic residues" evidence="2">
    <location>
        <begin position="57"/>
        <end position="119"/>
    </location>
</feature>
<feature type="compositionally biased region" description="Acidic residues" evidence="2">
    <location>
        <begin position="150"/>
        <end position="172"/>
    </location>
</feature>
<feature type="compositionally biased region" description="Low complexity" evidence="2">
    <location>
        <begin position="175"/>
        <end position="184"/>
    </location>
</feature>
<gene>
    <name evidence="1" type="primary">ERB1</name>
    <name type="ORF">UMAG_05714</name>
</gene>
<comment type="function">
    <text evidence="1">Component of the NOP7 complex, which is required for maturation of the 25S and 5.8S ribosomal RNAs and formation of the 60S ribosome.</text>
</comment>
<comment type="subunit">
    <text evidence="1">Component of the NOP7 complex, composed of ERB1, NOP7 and YTM1. The complex is held together by ERB1, which interacts with NOP7 via its N-terminal domain and with YTM1 via a high-affinity interaction between the seven-bladed beta-propeller domains of the 2 proteins. The NOP7 complex associates with the 66S pre-ribosome.</text>
</comment>
<comment type="subcellular location">
    <subcellularLocation>
        <location evidence="1">Nucleus</location>
        <location evidence="1">Nucleolus</location>
    </subcellularLocation>
    <subcellularLocation>
        <location evidence="1">Nucleus</location>
        <location evidence="1">Nucleoplasm</location>
    </subcellularLocation>
</comment>
<comment type="similarity">
    <text evidence="1">Belongs to the WD repeat BOP1/ERB1 family.</text>
</comment>
<protein>
    <recommendedName>
        <fullName evidence="1">Ribosome biogenesis protein ERB1</fullName>
    </recommendedName>
    <alternativeName>
        <fullName evidence="1">Eukaryotic ribosome biogenesis protein 1</fullName>
    </alternativeName>
</protein>
<evidence type="ECO:0000255" key="1">
    <source>
        <dbReference type="HAMAP-Rule" id="MF_03027"/>
    </source>
</evidence>
<evidence type="ECO:0000256" key="2">
    <source>
        <dbReference type="SAM" id="MobiDB-lite"/>
    </source>
</evidence>
<keyword id="KW-0539">Nucleus</keyword>
<keyword id="KW-1185">Reference proteome</keyword>
<keyword id="KW-0677">Repeat</keyword>
<keyword id="KW-0690">Ribosome biogenesis</keyword>
<keyword id="KW-0698">rRNA processing</keyword>
<keyword id="KW-0853">WD repeat</keyword>
<reference key="1">
    <citation type="journal article" date="2006" name="Nature">
        <title>Insights from the genome of the biotrophic fungal plant pathogen Ustilago maydis.</title>
        <authorList>
            <person name="Kaemper J."/>
            <person name="Kahmann R."/>
            <person name="Boelker M."/>
            <person name="Ma L.-J."/>
            <person name="Brefort T."/>
            <person name="Saville B.J."/>
            <person name="Banuett F."/>
            <person name="Kronstad J.W."/>
            <person name="Gold S.E."/>
            <person name="Mueller O."/>
            <person name="Perlin M.H."/>
            <person name="Woesten H.A.B."/>
            <person name="de Vries R."/>
            <person name="Ruiz-Herrera J."/>
            <person name="Reynaga-Pena C.G."/>
            <person name="Snetselaar K."/>
            <person name="McCann M."/>
            <person name="Perez-Martin J."/>
            <person name="Feldbruegge M."/>
            <person name="Basse C.W."/>
            <person name="Steinberg G."/>
            <person name="Ibeas J.I."/>
            <person name="Holloman W."/>
            <person name="Guzman P."/>
            <person name="Farman M.L."/>
            <person name="Stajich J.E."/>
            <person name="Sentandreu R."/>
            <person name="Gonzalez-Prieto J.M."/>
            <person name="Kennell J.C."/>
            <person name="Molina L."/>
            <person name="Schirawski J."/>
            <person name="Mendoza-Mendoza A."/>
            <person name="Greilinger D."/>
            <person name="Muench K."/>
            <person name="Roessel N."/>
            <person name="Scherer M."/>
            <person name="Vranes M."/>
            <person name="Ladendorf O."/>
            <person name="Vincon V."/>
            <person name="Fuchs U."/>
            <person name="Sandrock B."/>
            <person name="Meng S."/>
            <person name="Ho E.C.H."/>
            <person name="Cahill M.J."/>
            <person name="Boyce K.J."/>
            <person name="Klose J."/>
            <person name="Klosterman S.J."/>
            <person name="Deelstra H.J."/>
            <person name="Ortiz-Castellanos L."/>
            <person name="Li W."/>
            <person name="Sanchez-Alonso P."/>
            <person name="Schreier P.H."/>
            <person name="Haeuser-Hahn I."/>
            <person name="Vaupel M."/>
            <person name="Koopmann E."/>
            <person name="Friedrich G."/>
            <person name="Voss H."/>
            <person name="Schlueter T."/>
            <person name="Margolis J."/>
            <person name="Platt D."/>
            <person name="Swimmer C."/>
            <person name="Gnirke A."/>
            <person name="Chen F."/>
            <person name="Vysotskaia V."/>
            <person name="Mannhaupt G."/>
            <person name="Gueldener U."/>
            <person name="Muensterkoetter M."/>
            <person name="Haase D."/>
            <person name="Oesterheld M."/>
            <person name="Mewes H.-W."/>
            <person name="Mauceli E.W."/>
            <person name="DeCaprio D."/>
            <person name="Wade C.M."/>
            <person name="Butler J."/>
            <person name="Young S.K."/>
            <person name="Jaffe D.B."/>
            <person name="Calvo S.E."/>
            <person name="Nusbaum C."/>
            <person name="Galagan J.E."/>
            <person name="Birren B.W."/>
        </authorList>
    </citation>
    <scope>NUCLEOTIDE SEQUENCE [LARGE SCALE GENOMIC DNA]</scope>
    <source>
        <strain>DSM 14603 / FGSC 9021 / UM521</strain>
    </source>
</reference>
<reference key="2">
    <citation type="submission" date="2014-09" db="EMBL/GenBank/DDBJ databases">
        <authorList>
            <person name="Gueldener U."/>
            <person name="Muensterkoetter M."/>
            <person name="Walter M.C."/>
            <person name="Mannhaupt G."/>
            <person name="Kahmann R."/>
        </authorList>
    </citation>
    <scope>GENOME REANNOTATION</scope>
    <source>
        <strain>DSM 14603 / FGSC 9021 / UM521</strain>
    </source>
</reference>
<proteinExistence type="inferred from homology"/>
<name>ERB1_MYCMD</name>
<sequence>MVRPSSSSSASASAARSGAAKRKRNLPTATNPTTRASVAANVKGKGKTKALELDLVVSDDGEEDGELDLESDSGDDDANDDDDNDNEQDDFPEIDLEDSDDDQDVEDEDEPGAQEEVDSDNNKQASTQVHDIQVEEDDSSEEGYNSSDIDNSDFDDDADEGDLAYDSADEDERASAFAARSDASQTSIDEELSRMMSRYSSKPDEHSGSLSATNKLGIPRSQAAQAFDLRVRNPDGSAKGVFKRSEITGEMKRVYPEIDAAYDSDSSTEDPENRIGNVPLEWYDDLPHIGYDINGRKVMKPATKDELDKFLDTVDGDGEAWFSARDKSTGKDVRLSDEELAIIRKLQNAEIPDDAYDPYEDYVDWFTGEDKVMQTALSGRPEPKSRFVPSKWEHKKVMKIVRAIREGRIVPGAAANKDAKPKFYNIWADAHENDTRSPWAVMAAPKLALPGHAESYNPPAEYLFNEQEQKEWQEAEAEDRKQNFLPTKHDSLRRVGAYQNFVQERFERCLDLYLAPRMMRKKLDIHNPENLLPKLPSPKELRPFPITTSVVYVHPDGGRVRCLSVDPTGNWLVTGGDDGRARLWDVAIGRCTASWDVCEGMPKAERSAVHSIAWCPTKNYSLFTAVVHGRVAVIAPPQTQNYAKTSANAISSKSASSSSGATATSTASFLYATSAAATSMPSKPDARSPVAWTRPSEAERRTGVAMHLNITSPSAANLKTVVWHNKGDYFATVCPDSAAGSAGLLIHQLSKHRSQSPFRKASKGSSIQKLVFHPTKPWIFVATQRYIRIYDLMAQSLIKTLQSGFKWISTLDVHPSGDHLMVGSYDKKLAWFDLDLSARPYKVLKYHARAIRSVHFSTSWNLVADASDDGTLQLFYAKVGADYGENLTLVPLKVLRGHEVKNGLGVLDVKWHPNQPWLFSAGADGNALLWTT</sequence>
<dbReference type="EMBL" id="CM003155">
    <property type="protein sequence ID" value="KIS66931.1"/>
    <property type="molecule type" value="Genomic_DNA"/>
</dbReference>
<dbReference type="RefSeq" id="XP_011391464.1">
    <property type="nucleotide sequence ID" value="XM_011393162.1"/>
</dbReference>
<dbReference type="SMR" id="Q4P2E9"/>
<dbReference type="FunCoup" id="Q4P2E9">
    <property type="interactions" value="427"/>
</dbReference>
<dbReference type="STRING" id="237631.Q4P2E9"/>
<dbReference type="EnsemblFungi" id="KIS66931">
    <property type="protein sequence ID" value="KIS66931"/>
    <property type="gene ID" value="UMAG_05714"/>
</dbReference>
<dbReference type="GeneID" id="23565526"/>
<dbReference type="KEGG" id="uma:UMAG_05714"/>
<dbReference type="VEuPathDB" id="FungiDB:UMAG_05714"/>
<dbReference type="eggNOG" id="KOG0650">
    <property type="taxonomic scope" value="Eukaryota"/>
</dbReference>
<dbReference type="HOGENOM" id="CLU_011390_0_1_1"/>
<dbReference type="InParanoid" id="Q4P2E9"/>
<dbReference type="OMA" id="MRPAKGE"/>
<dbReference type="OrthoDB" id="5571054at2759"/>
<dbReference type="Proteomes" id="UP000000561">
    <property type="component" value="Chromosome 16"/>
</dbReference>
<dbReference type="GO" id="GO:0005654">
    <property type="term" value="C:nucleoplasm"/>
    <property type="evidence" value="ECO:0007669"/>
    <property type="project" value="UniProtKB-SubCell"/>
</dbReference>
<dbReference type="GO" id="GO:0070545">
    <property type="term" value="C:PeBoW complex"/>
    <property type="evidence" value="ECO:0000318"/>
    <property type="project" value="GO_Central"/>
</dbReference>
<dbReference type="GO" id="GO:0030687">
    <property type="term" value="C:preribosome, large subunit precursor"/>
    <property type="evidence" value="ECO:0000318"/>
    <property type="project" value="GO_Central"/>
</dbReference>
<dbReference type="GO" id="GO:0070180">
    <property type="term" value="F:large ribosomal subunit rRNA binding"/>
    <property type="evidence" value="ECO:0007669"/>
    <property type="project" value="EnsemblFungi"/>
</dbReference>
<dbReference type="GO" id="GO:0043021">
    <property type="term" value="F:ribonucleoprotein complex binding"/>
    <property type="evidence" value="ECO:0000318"/>
    <property type="project" value="GO_Central"/>
</dbReference>
<dbReference type="GO" id="GO:0000466">
    <property type="term" value="P:maturation of 5.8S rRNA from tricistronic rRNA transcript (SSU-rRNA, 5.8S rRNA, LSU-rRNA)"/>
    <property type="evidence" value="ECO:0007669"/>
    <property type="project" value="UniProtKB-UniRule"/>
</dbReference>
<dbReference type="GO" id="GO:0000463">
    <property type="term" value="P:maturation of LSU-rRNA from tricistronic rRNA transcript (SSU-rRNA, 5.8S rRNA, LSU-rRNA)"/>
    <property type="evidence" value="ECO:0000318"/>
    <property type="project" value="GO_Central"/>
</dbReference>
<dbReference type="FunFam" id="2.130.10.10:FF:000576">
    <property type="entry name" value="Ribosome biogenesis protein ERB1"/>
    <property type="match status" value="1"/>
</dbReference>
<dbReference type="Gene3D" id="2.130.10.10">
    <property type="entry name" value="YVTN repeat-like/Quinoprotein amine dehydrogenase"/>
    <property type="match status" value="1"/>
</dbReference>
<dbReference type="HAMAP" id="MF_03027">
    <property type="entry name" value="BOP1"/>
    <property type="match status" value="1"/>
</dbReference>
<dbReference type="InterPro" id="IPR028598">
    <property type="entry name" value="BOP1/Erb1"/>
</dbReference>
<dbReference type="InterPro" id="IPR012953">
    <property type="entry name" value="BOP1_N_dom"/>
</dbReference>
<dbReference type="InterPro" id="IPR015943">
    <property type="entry name" value="WD40/YVTN_repeat-like_dom_sf"/>
</dbReference>
<dbReference type="InterPro" id="IPR019775">
    <property type="entry name" value="WD40_repeat_CS"/>
</dbReference>
<dbReference type="InterPro" id="IPR036322">
    <property type="entry name" value="WD40_repeat_dom_sf"/>
</dbReference>
<dbReference type="InterPro" id="IPR001680">
    <property type="entry name" value="WD40_rpt"/>
</dbReference>
<dbReference type="PANTHER" id="PTHR17605:SF0">
    <property type="entry name" value="RIBOSOME BIOGENESIS PROTEIN BOP1"/>
    <property type="match status" value="1"/>
</dbReference>
<dbReference type="PANTHER" id="PTHR17605">
    <property type="entry name" value="RIBOSOME BIOGENESIS PROTEIN BOP1 BLOCK OF PROLIFERATION 1 PROTEIN"/>
    <property type="match status" value="1"/>
</dbReference>
<dbReference type="Pfam" id="PF08145">
    <property type="entry name" value="BOP1NT"/>
    <property type="match status" value="1"/>
</dbReference>
<dbReference type="Pfam" id="PF00400">
    <property type="entry name" value="WD40"/>
    <property type="match status" value="3"/>
</dbReference>
<dbReference type="SMART" id="SM01035">
    <property type="entry name" value="BOP1NT"/>
    <property type="match status" value="1"/>
</dbReference>
<dbReference type="SMART" id="SM00320">
    <property type="entry name" value="WD40"/>
    <property type="match status" value="5"/>
</dbReference>
<dbReference type="SUPFAM" id="SSF50978">
    <property type="entry name" value="WD40 repeat-like"/>
    <property type="match status" value="1"/>
</dbReference>
<dbReference type="PROSITE" id="PS00678">
    <property type="entry name" value="WD_REPEATS_1"/>
    <property type="match status" value="1"/>
</dbReference>
<dbReference type="PROSITE" id="PS50082">
    <property type="entry name" value="WD_REPEATS_2"/>
    <property type="match status" value="2"/>
</dbReference>
<dbReference type="PROSITE" id="PS50294">
    <property type="entry name" value="WD_REPEATS_REGION"/>
    <property type="match status" value="2"/>
</dbReference>
<accession>Q4P2E9</accession>
<accession>A0A0D1DSR7</accession>
<organism>
    <name type="scientific">Mycosarcoma maydis</name>
    <name type="common">Corn smut fungus</name>
    <name type="synonym">Ustilago maydis</name>
    <dbReference type="NCBI Taxonomy" id="5270"/>
    <lineage>
        <taxon>Eukaryota</taxon>
        <taxon>Fungi</taxon>
        <taxon>Dikarya</taxon>
        <taxon>Basidiomycota</taxon>
        <taxon>Ustilaginomycotina</taxon>
        <taxon>Ustilaginomycetes</taxon>
        <taxon>Ustilaginales</taxon>
        <taxon>Ustilaginaceae</taxon>
        <taxon>Mycosarcoma</taxon>
    </lineage>
</organism>